<comment type="function">
    <text evidence="2 4 5">Acts as an acyl-protein thioesterase hydrolyzing fatty acids from S-acylated cysteine residues in proteins such as trimeric G alpha proteins, GSDMD, GAP43, ZDHHC6 or HRAS (PubMed:38538834). Deacylates GAP43 (By similarity). Mediates depalmitoylation of ZDHHC6 (By similarity). Has lysophospholipase activity (PubMed:10064901). Hydrolyzes prostaglandin glycerol esters (PG-Gs) (PubMed:25301951). Hydrolyzes PG-Gs in the following order prostaglandin D2-glycerol ester (PGD2-G) &gt; prostaglandin E2 glycerol ester (PGE2-G) &gt; prostaglandin F2-alpha-glycerol ester (PGF2-alpha-G) (By similarity). Hydrolyzes 1-arachidonoylglycerol but not 2-arachidonoylglycerol or arachidonoylethanolamide (By similarity).</text>
</comment>
<comment type="catalytic activity">
    <reaction evidence="5">
        <text>S-hexadecanoyl-L-cysteinyl-[protein] + H2O = L-cysteinyl-[protein] + hexadecanoate + H(+)</text>
        <dbReference type="Rhea" id="RHEA:19233"/>
        <dbReference type="Rhea" id="RHEA-COMP:10131"/>
        <dbReference type="Rhea" id="RHEA-COMP:11032"/>
        <dbReference type="ChEBI" id="CHEBI:7896"/>
        <dbReference type="ChEBI" id="CHEBI:15377"/>
        <dbReference type="ChEBI" id="CHEBI:15378"/>
        <dbReference type="ChEBI" id="CHEBI:29950"/>
        <dbReference type="ChEBI" id="CHEBI:74151"/>
        <dbReference type="EC" id="3.1.2.22"/>
    </reaction>
</comment>
<comment type="catalytic activity">
    <reaction evidence="2">
        <text>prostaglandin E2 1-glyceryl ester + H2O = prostaglandin E2 + glycerol + H(+)</text>
        <dbReference type="Rhea" id="RHEA:48296"/>
        <dbReference type="ChEBI" id="CHEBI:15377"/>
        <dbReference type="ChEBI" id="CHEBI:15378"/>
        <dbReference type="ChEBI" id="CHEBI:17754"/>
        <dbReference type="ChEBI" id="CHEBI:90230"/>
        <dbReference type="ChEBI" id="CHEBI:606564"/>
    </reaction>
    <physiologicalReaction direction="left-to-right" evidence="2">
        <dbReference type="Rhea" id="RHEA:48297"/>
    </physiologicalReaction>
</comment>
<comment type="catalytic activity">
    <reaction evidence="2">
        <text>1-hexadecanoyl-sn-glycero-3-phosphocholine + H2O = sn-glycerol 3-phosphocholine + hexadecanoate + H(+)</text>
        <dbReference type="Rhea" id="RHEA:40435"/>
        <dbReference type="ChEBI" id="CHEBI:7896"/>
        <dbReference type="ChEBI" id="CHEBI:15377"/>
        <dbReference type="ChEBI" id="CHEBI:15378"/>
        <dbReference type="ChEBI" id="CHEBI:16870"/>
        <dbReference type="ChEBI" id="CHEBI:72998"/>
    </reaction>
    <physiologicalReaction direction="left-to-right" evidence="2">
        <dbReference type="Rhea" id="RHEA:40436"/>
    </physiologicalReaction>
</comment>
<comment type="catalytic activity">
    <reaction evidence="2">
        <text>1-octadecanoyl-sn-glycero-3-phosphocholine + H2O = octadecanoate + sn-glycerol 3-phosphocholine + H(+)</text>
        <dbReference type="Rhea" id="RHEA:40887"/>
        <dbReference type="ChEBI" id="CHEBI:15377"/>
        <dbReference type="ChEBI" id="CHEBI:15378"/>
        <dbReference type="ChEBI" id="CHEBI:16870"/>
        <dbReference type="ChEBI" id="CHEBI:25629"/>
        <dbReference type="ChEBI" id="CHEBI:73858"/>
    </reaction>
    <physiologicalReaction direction="left-to-right" evidence="2">
        <dbReference type="Rhea" id="RHEA:40888"/>
    </physiologicalReaction>
</comment>
<comment type="catalytic activity">
    <reaction evidence="2">
        <text>1-hexadecanoyl-sn-glycero-3-phosphate + H2O = sn-glycerol 3-phosphate + hexadecanoate + H(+)</text>
        <dbReference type="Rhea" id="RHEA:49092"/>
        <dbReference type="ChEBI" id="CHEBI:7896"/>
        <dbReference type="ChEBI" id="CHEBI:15377"/>
        <dbReference type="ChEBI" id="CHEBI:15378"/>
        <dbReference type="ChEBI" id="CHEBI:57518"/>
        <dbReference type="ChEBI" id="CHEBI:57597"/>
    </reaction>
    <physiologicalReaction direction="left-to-right" evidence="2">
        <dbReference type="Rhea" id="RHEA:49093"/>
    </physiologicalReaction>
</comment>
<comment type="catalytic activity">
    <reaction evidence="2">
        <text>1-hexadecanoyl-sn-glycero-3-phospho-L-serine + H2O = sn-glycero-3-phospho-L-serine + hexadecanoate + H(+)</text>
        <dbReference type="Rhea" id="RHEA:44552"/>
        <dbReference type="ChEBI" id="CHEBI:7896"/>
        <dbReference type="ChEBI" id="CHEBI:15377"/>
        <dbReference type="ChEBI" id="CHEBI:15378"/>
        <dbReference type="ChEBI" id="CHEBI:64765"/>
        <dbReference type="ChEBI" id="CHEBI:75020"/>
    </reaction>
    <physiologicalReaction direction="left-to-right" evidence="2">
        <dbReference type="Rhea" id="RHEA:44553"/>
    </physiologicalReaction>
</comment>
<comment type="subcellular location">
    <subcellularLocation>
        <location evidence="2">Cytoplasm</location>
    </subcellularLocation>
</comment>
<comment type="tissue specificity">
    <text evidence="4">Ubiquitous; detected at low levels.</text>
</comment>
<comment type="similarity">
    <text evidence="6">Belongs to the AB hydrolase superfamily. AB hydrolase 2 family.</text>
</comment>
<accession>Q9WTL7</accession>
<accession>Q3TJD6</accession>
<sequence>MCGNTMSVPLLTDAATVSGAERETAAVIFLHGLGDTGHSWADALSTIRLPHVKYICPHAPRIPVTLNMKMVMPSWFDLMGLSPDAPEDEAGIKKAAENIKALIEHEMKNGIPANRIVLGGFSQGGALSLYTALTCPHPLAGIVALSCWLPLHRNFPQAANGSAKDLAILQCHGELDPMVPVRFGALTAEKLRTVVTPARVQFKTYPGVMHSSCPQEMAAVKEFLEKLLPPV</sequence>
<name>LYPA2_MOUSE</name>
<dbReference type="EC" id="3.1.2.-" evidence="2"/>
<dbReference type="EC" id="3.1.2.22" evidence="5"/>
<dbReference type="EMBL" id="AB009653">
    <property type="protein sequence ID" value="BAA76751.1"/>
    <property type="molecule type" value="mRNA"/>
</dbReference>
<dbReference type="EMBL" id="AK003689">
    <property type="protein sequence ID" value="BAB22940.1"/>
    <property type="molecule type" value="mRNA"/>
</dbReference>
<dbReference type="EMBL" id="AK075590">
    <property type="protein sequence ID" value="BAC35841.1"/>
    <property type="molecule type" value="mRNA"/>
</dbReference>
<dbReference type="EMBL" id="AK089112">
    <property type="protein sequence ID" value="BAC40757.1"/>
    <property type="molecule type" value="mRNA"/>
</dbReference>
<dbReference type="EMBL" id="AK167478">
    <property type="protein sequence ID" value="BAE39559.1"/>
    <property type="molecule type" value="mRNA"/>
</dbReference>
<dbReference type="EMBL" id="BC068120">
    <property type="protein sequence ID" value="AAH68120.1"/>
    <property type="molecule type" value="mRNA"/>
</dbReference>
<dbReference type="CCDS" id="CCDS18797.1"/>
<dbReference type="RefSeq" id="NP_001405973.1">
    <property type="nucleotide sequence ID" value="NM_001419044.1"/>
</dbReference>
<dbReference type="RefSeq" id="NP_001405974.1">
    <property type="nucleotide sequence ID" value="NM_001419045.1"/>
</dbReference>
<dbReference type="RefSeq" id="NP_001405975.1">
    <property type="nucleotide sequence ID" value="NM_001419046.1"/>
</dbReference>
<dbReference type="RefSeq" id="NP_036072.1">
    <property type="nucleotide sequence ID" value="NM_011942.2"/>
</dbReference>
<dbReference type="SMR" id="Q9WTL7"/>
<dbReference type="BioGRID" id="204948">
    <property type="interactions" value="1"/>
</dbReference>
<dbReference type="FunCoup" id="Q9WTL7">
    <property type="interactions" value="2824"/>
</dbReference>
<dbReference type="STRING" id="10090.ENSMUSP00000064204"/>
<dbReference type="BindingDB" id="Q9WTL7"/>
<dbReference type="ChEMBL" id="CHEMBL3259480"/>
<dbReference type="ESTHER" id="mouse-lypla2">
    <property type="family name" value="LYsophospholipase_carboxylesterase"/>
</dbReference>
<dbReference type="GlyGen" id="Q9WTL7">
    <property type="glycosylation" value="3 sites, 1 O-linked glycan (2 sites)"/>
</dbReference>
<dbReference type="iPTMnet" id="Q9WTL7"/>
<dbReference type="PhosphoSitePlus" id="Q9WTL7"/>
<dbReference type="SwissPalm" id="Q9WTL7"/>
<dbReference type="REPRODUCTION-2DPAGE" id="IPI00123518"/>
<dbReference type="REPRODUCTION-2DPAGE" id="Q9WTL7"/>
<dbReference type="jPOST" id="Q9WTL7"/>
<dbReference type="PaxDb" id="10090-ENSMUSP00000064204"/>
<dbReference type="PeptideAtlas" id="Q9WTL7"/>
<dbReference type="ProteomicsDB" id="252689"/>
<dbReference type="Pumba" id="Q9WTL7"/>
<dbReference type="Antibodypedia" id="30196">
    <property type="antibodies" value="172 antibodies from 26 providers"/>
</dbReference>
<dbReference type="DNASU" id="26394"/>
<dbReference type="Ensembl" id="ENSMUST00000067567.5">
    <property type="protein sequence ID" value="ENSMUSP00000064204.5"/>
    <property type="gene ID" value="ENSMUSG00000028670.15"/>
</dbReference>
<dbReference type="Ensembl" id="ENSMUST00000105852.8">
    <property type="protein sequence ID" value="ENSMUSP00000101478.2"/>
    <property type="gene ID" value="ENSMUSG00000028670.15"/>
</dbReference>
<dbReference type="GeneID" id="26394"/>
<dbReference type="KEGG" id="mmu:26394"/>
<dbReference type="UCSC" id="uc008vhm.2">
    <property type="organism name" value="mouse"/>
</dbReference>
<dbReference type="AGR" id="MGI:1347000"/>
<dbReference type="CTD" id="11313"/>
<dbReference type="MGI" id="MGI:1347000">
    <property type="gene designation" value="Lypla2"/>
</dbReference>
<dbReference type="VEuPathDB" id="HostDB:ENSMUSG00000028670"/>
<dbReference type="eggNOG" id="KOG2112">
    <property type="taxonomic scope" value="Eukaryota"/>
</dbReference>
<dbReference type="GeneTree" id="ENSGT00940000156197"/>
<dbReference type="HOGENOM" id="CLU_049413_3_5_1"/>
<dbReference type="InParanoid" id="Q9WTL7"/>
<dbReference type="OMA" id="WYDILAM"/>
<dbReference type="OrthoDB" id="2418081at2759"/>
<dbReference type="PhylomeDB" id="Q9WTL7"/>
<dbReference type="TreeFam" id="TF314619"/>
<dbReference type="BRENDA" id="3.1.1.5">
    <property type="organism ID" value="3474"/>
</dbReference>
<dbReference type="Reactome" id="R-MMU-373760">
    <property type="pathway name" value="L1CAM interactions"/>
</dbReference>
<dbReference type="BioGRID-ORCS" id="26394">
    <property type="hits" value="1 hit in 78 CRISPR screens"/>
</dbReference>
<dbReference type="ChiTaRS" id="Lypla2">
    <property type="organism name" value="mouse"/>
</dbReference>
<dbReference type="PRO" id="PR:Q9WTL7"/>
<dbReference type="Proteomes" id="UP000000589">
    <property type="component" value="Chromosome 4"/>
</dbReference>
<dbReference type="RNAct" id="Q9WTL7">
    <property type="molecule type" value="protein"/>
</dbReference>
<dbReference type="Bgee" id="ENSMUSG00000028670">
    <property type="expression patterns" value="Expressed in embryonic brain and 245 other cell types or tissues"/>
</dbReference>
<dbReference type="GO" id="GO:0005737">
    <property type="term" value="C:cytoplasm"/>
    <property type="evidence" value="ECO:0000314"/>
    <property type="project" value="UniProtKB"/>
</dbReference>
<dbReference type="GO" id="GO:0005829">
    <property type="term" value="C:cytosol"/>
    <property type="evidence" value="ECO:0007669"/>
    <property type="project" value="Ensembl"/>
</dbReference>
<dbReference type="GO" id="GO:0005795">
    <property type="term" value="C:Golgi stack"/>
    <property type="evidence" value="ECO:0000314"/>
    <property type="project" value="UniProtKB"/>
</dbReference>
<dbReference type="GO" id="GO:0005654">
    <property type="term" value="C:nucleoplasm"/>
    <property type="evidence" value="ECO:0007669"/>
    <property type="project" value="Ensembl"/>
</dbReference>
<dbReference type="GO" id="GO:0004622">
    <property type="term" value="F:lysophospholipase activity"/>
    <property type="evidence" value="ECO:0000250"/>
    <property type="project" value="UniProtKB"/>
</dbReference>
<dbReference type="GO" id="GO:0008474">
    <property type="term" value="F:palmitoyl-(protein) hydrolase activity"/>
    <property type="evidence" value="ECO:0000314"/>
    <property type="project" value="UniProtKB"/>
</dbReference>
<dbReference type="GO" id="GO:0046464">
    <property type="term" value="P:acylglycerol catabolic process"/>
    <property type="evidence" value="ECO:0000250"/>
    <property type="project" value="UniProtKB"/>
</dbReference>
<dbReference type="GO" id="GO:0006631">
    <property type="term" value="P:fatty acid metabolic process"/>
    <property type="evidence" value="ECO:0007669"/>
    <property type="project" value="UniProtKB-KW"/>
</dbReference>
<dbReference type="GO" id="GO:1905344">
    <property type="term" value="P:prostaglandin catabolic process"/>
    <property type="evidence" value="ECO:0000314"/>
    <property type="project" value="UniProtKB"/>
</dbReference>
<dbReference type="GO" id="GO:0002084">
    <property type="term" value="P:protein depalmitoylation"/>
    <property type="evidence" value="ECO:0000314"/>
    <property type="project" value="UniProtKB"/>
</dbReference>
<dbReference type="FunFam" id="3.40.50.1820:FF:000010">
    <property type="entry name" value="Acyl-protein thioesterase 2"/>
    <property type="match status" value="1"/>
</dbReference>
<dbReference type="Gene3D" id="3.40.50.1820">
    <property type="entry name" value="alpha/beta hydrolase"/>
    <property type="match status" value="1"/>
</dbReference>
<dbReference type="InterPro" id="IPR029058">
    <property type="entry name" value="AB_hydrolase_fold"/>
</dbReference>
<dbReference type="InterPro" id="IPR050565">
    <property type="entry name" value="LYPA1-2/EST-like"/>
</dbReference>
<dbReference type="InterPro" id="IPR003140">
    <property type="entry name" value="PLipase/COase/thioEstase"/>
</dbReference>
<dbReference type="PANTHER" id="PTHR10655:SF13">
    <property type="entry name" value="ACYL-PROTEIN THIOESTERASE 2"/>
    <property type="match status" value="1"/>
</dbReference>
<dbReference type="PANTHER" id="PTHR10655">
    <property type="entry name" value="LYSOPHOSPHOLIPASE-RELATED"/>
    <property type="match status" value="1"/>
</dbReference>
<dbReference type="Pfam" id="PF02230">
    <property type="entry name" value="Abhydrolase_2"/>
    <property type="match status" value="1"/>
</dbReference>
<dbReference type="SUPFAM" id="SSF53474">
    <property type="entry name" value="alpha/beta-Hydrolases"/>
    <property type="match status" value="1"/>
</dbReference>
<keyword id="KW-0963">Cytoplasm</keyword>
<keyword id="KW-0903">Direct protein sequencing</keyword>
<keyword id="KW-0276">Fatty acid metabolism</keyword>
<keyword id="KW-0378">Hydrolase</keyword>
<keyword id="KW-0443">Lipid metabolism</keyword>
<keyword id="KW-0449">Lipoprotein</keyword>
<keyword id="KW-0564">Palmitate</keyword>
<keyword id="KW-0597">Phosphoprotein</keyword>
<keyword id="KW-1185">Reference proteome</keyword>
<reference key="1">
    <citation type="journal article" date="1999" name="Biochim. Biophys. Acta">
        <title>Sequence, expression in Escherichia coli, and characterization of lysophospholipase II.</title>
        <authorList>
            <person name="Toyoda T."/>
            <person name="Sugimoto H."/>
            <person name="Yamashita S."/>
        </authorList>
    </citation>
    <scope>NUCLEOTIDE SEQUENCE [MRNA]</scope>
    <scope>FUNCTION</scope>
    <scope>TISSUE SPECIFICITY</scope>
    <source>
        <strain>C57BL/6J</strain>
        <tissue>Embryo</tissue>
    </source>
</reference>
<reference key="2">
    <citation type="journal article" date="2005" name="Science">
        <title>The transcriptional landscape of the mammalian genome.</title>
        <authorList>
            <person name="Carninci P."/>
            <person name="Kasukawa T."/>
            <person name="Katayama S."/>
            <person name="Gough J."/>
            <person name="Frith M.C."/>
            <person name="Maeda N."/>
            <person name="Oyama R."/>
            <person name="Ravasi T."/>
            <person name="Lenhard B."/>
            <person name="Wells C."/>
            <person name="Kodzius R."/>
            <person name="Shimokawa K."/>
            <person name="Bajic V.B."/>
            <person name="Brenner S.E."/>
            <person name="Batalov S."/>
            <person name="Forrest A.R."/>
            <person name="Zavolan M."/>
            <person name="Davis M.J."/>
            <person name="Wilming L.G."/>
            <person name="Aidinis V."/>
            <person name="Allen J.E."/>
            <person name="Ambesi-Impiombato A."/>
            <person name="Apweiler R."/>
            <person name="Aturaliya R.N."/>
            <person name="Bailey T.L."/>
            <person name="Bansal M."/>
            <person name="Baxter L."/>
            <person name="Beisel K.W."/>
            <person name="Bersano T."/>
            <person name="Bono H."/>
            <person name="Chalk A.M."/>
            <person name="Chiu K.P."/>
            <person name="Choudhary V."/>
            <person name="Christoffels A."/>
            <person name="Clutterbuck D.R."/>
            <person name="Crowe M.L."/>
            <person name="Dalla E."/>
            <person name="Dalrymple B.P."/>
            <person name="de Bono B."/>
            <person name="Della Gatta G."/>
            <person name="di Bernardo D."/>
            <person name="Down T."/>
            <person name="Engstrom P."/>
            <person name="Fagiolini M."/>
            <person name="Faulkner G."/>
            <person name="Fletcher C.F."/>
            <person name="Fukushima T."/>
            <person name="Furuno M."/>
            <person name="Futaki S."/>
            <person name="Gariboldi M."/>
            <person name="Georgii-Hemming P."/>
            <person name="Gingeras T.R."/>
            <person name="Gojobori T."/>
            <person name="Green R.E."/>
            <person name="Gustincich S."/>
            <person name="Harbers M."/>
            <person name="Hayashi Y."/>
            <person name="Hensch T.K."/>
            <person name="Hirokawa N."/>
            <person name="Hill D."/>
            <person name="Huminiecki L."/>
            <person name="Iacono M."/>
            <person name="Ikeo K."/>
            <person name="Iwama A."/>
            <person name="Ishikawa T."/>
            <person name="Jakt M."/>
            <person name="Kanapin A."/>
            <person name="Katoh M."/>
            <person name="Kawasawa Y."/>
            <person name="Kelso J."/>
            <person name="Kitamura H."/>
            <person name="Kitano H."/>
            <person name="Kollias G."/>
            <person name="Krishnan S.P."/>
            <person name="Kruger A."/>
            <person name="Kummerfeld S.K."/>
            <person name="Kurochkin I.V."/>
            <person name="Lareau L.F."/>
            <person name="Lazarevic D."/>
            <person name="Lipovich L."/>
            <person name="Liu J."/>
            <person name="Liuni S."/>
            <person name="McWilliam S."/>
            <person name="Madan Babu M."/>
            <person name="Madera M."/>
            <person name="Marchionni L."/>
            <person name="Matsuda H."/>
            <person name="Matsuzawa S."/>
            <person name="Miki H."/>
            <person name="Mignone F."/>
            <person name="Miyake S."/>
            <person name="Morris K."/>
            <person name="Mottagui-Tabar S."/>
            <person name="Mulder N."/>
            <person name="Nakano N."/>
            <person name="Nakauchi H."/>
            <person name="Ng P."/>
            <person name="Nilsson R."/>
            <person name="Nishiguchi S."/>
            <person name="Nishikawa S."/>
            <person name="Nori F."/>
            <person name="Ohara O."/>
            <person name="Okazaki Y."/>
            <person name="Orlando V."/>
            <person name="Pang K.C."/>
            <person name="Pavan W.J."/>
            <person name="Pavesi G."/>
            <person name="Pesole G."/>
            <person name="Petrovsky N."/>
            <person name="Piazza S."/>
            <person name="Reed J."/>
            <person name="Reid J.F."/>
            <person name="Ring B.Z."/>
            <person name="Ringwald M."/>
            <person name="Rost B."/>
            <person name="Ruan Y."/>
            <person name="Salzberg S.L."/>
            <person name="Sandelin A."/>
            <person name="Schneider C."/>
            <person name="Schoenbach C."/>
            <person name="Sekiguchi K."/>
            <person name="Semple C.A."/>
            <person name="Seno S."/>
            <person name="Sessa L."/>
            <person name="Sheng Y."/>
            <person name="Shibata Y."/>
            <person name="Shimada H."/>
            <person name="Shimada K."/>
            <person name="Silva D."/>
            <person name="Sinclair B."/>
            <person name="Sperling S."/>
            <person name="Stupka E."/>
            <person name="Sugiura K."/>
            <person name="Sultana R."/>
            <person name="Takenaka Y."/>
            <person name="Taki K."/>
            <person name="Tammoja K."/>
            <person name="Tan S.L."/>
            <person name="Tang S."/>
            <person name="Taylor M.S."/>
            <person name="Tegner J."/>
            <person name="Teichmann S.A."/>
            <person name="Ueda H.R."/>
            <person name="van Nimwegen E."/>
            <person name="Verardo R."/>
            <person name="Wei C.L."/>
            <person name="Yagi K."/>
            <person name="Yamanishi H."/>
            <person name="Zabarovsky E."/>
            <person name="Zhu S."/>
            <person name="Zimmer A."/>
            <person name="Hide W."/>
            <person name="Bult C."/>
            <person name="Grimmond S.M."/>
            <person name="Teasdale R.D."/>
            <person name="Liu E.T."/>
            <person name="Brusic V."/>
            <person name="Quackenbush J."/>
            <person name="Wahlestedt C."/>
            <person name="Mattick J.S."/>
            <person name="Hume D.A."/>
            <person name="Kai C."/>
            <person name="Sasaki D."/>
            <person name="Tomaru Y."/>
            <person name="Fukuda S."/>
            <person name="Kanamori-Katayama M."/>
            <person name="Suzuki M."/>
            <person name="Aoki J."/>
            <person name="Arakawa T."/>
            <person name="Iida J."/>
            <person name="Imamura K."/>
            <person name="Itoh M."/>
            <person name="Kato T."/>
            <person name="Kawaji H."/>
            <person name="Kawagashira N."/>
            <person name="Kawashima T."/>
            <person name="Kojima M."/>
            <person name="Kondo S."/>
            <person name="Konno H."/>
            <person name="Nakano K."/>
            <person name="Ninomiya N."/>
            <person name="Nishio T."/>
            <person name="Okada M."/>
            <person name="Plessy C."/>
            <person name="Shibata K."/>
            <person name="Shiraki T."/>
            <person name="Suzuki S."/>
            <person name="Tagami M."/>
            <person name="Waki K."/>
            <person name="Watahiki A."/>
            <person name="Okamura-Oho Y."/>
            <person name="Suzuki H."/>
            <person name="Kawai J."/>
            <person name="Hayashizaki Y."/>
        </authorList>
    </citation>
    <scope>NUCLEOTIDE SEQUENCE [LARGE SCALE MRNA]</scope>
    <source>
        <strain>C57BL/6J</strain>
        <strain>NOD</strain>
        <tissue>Embryo</tissue>
        <tissue>Kidney</tissue>
        <tissue>Placenta</tissue>
        <tissue>Thymus</tissue>
    </source>
</reference>
<reference key="3">
    <citation type="journal article" date="2004" name="Genome Res.">
        <title>The status, quality, and expansion of the NIH full-length cDNA project: the Mammalian Gene Collection (MGC).</title>
        <authorList>
            <consortium name="The MGC Project Team"/>
        </authorList>
    </citation>
    <scope>NUCLEOTIDE SEQUENCE [LARGE SCALE MRNA]</scope>
    <source>
        <strain>C57BL/6J</strain>
    </source>
</reference>
<reference key="4">
    <citation type="submission" date="2009-01" db="UniProtKB">
        <authorList>
            <person name="Lubec G."/>
            <person name="Sunyer B."/>
            <person name="Chen W.-Q."/>
        </authorList>
    </citation>
    <scope>PROTEIN SEQUENCE OF 154-164</scope>
    <scope>IDENTIFICATION BY MASS SPECTROMETRY</scope>
    <source>
        <strain>OF1</strain>
        <tissue>Hippocampus</tissue>
    </source>
</reference>
<reference key="5">
    <citation type="journal article" date="2010" name="Cell">
        <title>A tissue-specific atlas of mouse protein phosphorylation and expression.</title>
        <authorList>
            <person name="Huttlin E.L."/>
            <person name="Jedrychowski M.P."/>
            <person name="Elias J.E."/>
            <person name="Goswami T."/>
            <person name="Rad R."/>
            <person name="Beausoleil S.A."/>
            <person name="Villen J."/>
            <person name="Haas W."/>
            <person name="Sowa M.E."/>
            <person name="Gygi S.P."/>
        </authorList>
    </citation>
    <scope>IDENTIFICATION BY MASS SPECTROMETRY [LARGE SCALE ANALYSIS]</scope>
    <source>
        <tissue>Brain</tissue>
        <tissue>Brown adipose tissue</tissue>
        <tissue>Kidney</tissue>
        <tissue>Liver</tissue>
        <tissue>Lung</tissue>
        <tissue>Pancreas</tissue>
        <tissue>Spleen</tissue>
        <tissue>Testis</tissue>
    </source>
</reference>
<reference key="6">
    <citation type="journal article" date="2014" name="J. Biol. Chem.">
        <title>Identification of the major prostaglandin glycerol ester hydrolase in human cancer cells.</title>
        <authorList>
            <person name="Manna J.D."/>
            <person name="Wepy J.A."/>
            <person name="Hsu K.L."/>
            <person name="Chang J.W."/>
            <person name="Cravatt B.F."/>
            <person name="Marnett L.J."/>
        </authorList>
    </citation>
    <scope>FUNCTION</scope>
    <scope>ACTIVITY REGULATION</scope>
</reference>
<reference key="7">
    <citation type="journal article" date="2024" name="Nat. Cell Biol.">
        <title>A palmitoylation-depalmitoylation relay spatiotemporally controls GSDMD activation in pyroptosis.</title>
        <authorList>
            <person name="Zhang N."/>
            <person name="Zhang J."/>
            <person name="Yang Y."/>
            <person name="Shan H."/>
            <person name="Hou S."/>
            <person name="Fang H."/>
            <person name="Ma M."/>
            <person name="Chen Z."/>
            <person name="Tan L."/>
            <person name="Xu D."/>
        </authorList>
    </citation>
    <scope>FUNCTION</scope>
    <scope>CATALYTIC ACTIVITY</scope>
</reference>
<feature type="chain" id="PRO_0000102272" description="Acyl-protein thioesterase 2">
    <location>
        <begin position="1"/>
        <end position="231"/>
    </location>
</feature>
<feature type="active site" description="Charge relay system" evidence="2">
    <location>
        <position position="122"/>
    </location>
</feature>
<feature type="active site" description="Charge relay system" evidence="1">
    <location>
        <position position="176"/>
    </location>
</feature>
<feature type="active site" description="Charge relay system" evidence="1">
    <location>
        <position position="210"/>
    </location>
</feature>
<feature type="modified residue" description="Phosphoserine" evidence="3">
    <location>
        <position position="82"/>
    </location>
</feature>
<feature type="lipid moiety-binding region" description="S-palmitoyl cysteine" evidence="2">
    <location>
        <position position="2"/>
    </location>
</feature>
<gene>
    <name type="primary">Lypla2</name>
</gene>
<organism>
    <name type="scientific">Mus musculus</name>
    <name type="common">Mouse</name>
    <dbReference type="NCBI Taxonomy" id="10090"/>
    <lineage>
        <taxon>Eukaryota</taxon>
        <taxon>Metazoa</taxon>
        <taxon>Chordata</taxon>
        <taxon>Craniata</taxon>
        <taxon>Vertebrata</taxon>
        <taxon>Euteleostomi</taxon>
        <taxon>Mammalia</taxon>
        <taxon>Eutheria</taxon>
        <taxon>Euarchontoglires</taxon>
        <taxon>Glires</taxon>
        <taxon>Rodentia</taxon>
        <taxon>Myomorpha</taxon>
        <taxon>Muroidea</taxon>
        <taxon>Muridae</taxon>
        <taxon>Murinae</taxon>
        <taxon>Mus</taxon>
        <taxon>Mus</taxon>
    </lineage>
</organism>
<evidence type="ECO:0000250" key="1">
    <source>
        <dbReference type="UniProtKB" id="O75608"/>
    </source>
</evidence>
<evidence type="ECO:0000250" key="2">
    <source>
        <dbReference type="UniProtKB" id="O95372"/>
    </source>
</evidence>
<evidence type="ECO:0000250" key="3">
    <source>
        <dbReference type="UniProtKB" id="Q9QYL8"/>
    </source>
</evidence>
<evidence type="ECO:0000269" key="4">
    <source>
    </source>
</evidence>
<evidence type="ECO:0000269" key="5">
    <source>
    </source>
</evidence>
<evidence type="ECO:0000305" key="6"/>
<proteinExistence type="evidence at protein level"/>
<protein>
    <recommendedName>
        <fullName>Acyl-protein thioesterase 2</fullName>
        <shortName>APT-2</shortName>
        <ecNumber evidence="2">3.1.2.-</ecNumber>
    </recommendedName>
    <alternativeName>
        <fullName>Lysophospholipase 2</fullName>
    </alternativeName>
    <alternativeName>
        <fullName>Lysophospholipase II</fullName>
        <shortName>LPL-II</shortName>
        <shortName>LysoPLA II</shortName>
        <shortName>mLyso II</shortName>
    </alternativeName>
    <alternativeName>
        <fullName evidence="6">Palmitoyl-protein hydrolase</fullName>
        <ecNumber evidence="5">3.1.2.22</ecNumber>
    </alternativeName>
</protein>